<sequence>MASRLPTAWSCEPVTFEDVTLGFTPEEWGLLDLKQKSLYREVMLENYRNLVSVEHQLSKPDVVSQLEEAEDFWPVERGIPQDTIPEYPELQLDPKLDPLPAESPLMNIEVVEVLTLNQEVAGPRNAQIQALYAEDGSLSADAPSEQVQQQGKHPGDPEAARQRFRQFRYKDMTGPREALDQLRELCHQWLQPKARSKEQILELLVLEQFLGALPVKLRTWVESQHPENCQEVVALVEGVTWMSEEEVLPAGQPAEGTTCCLEVTAQQEEKQEDAAICPVTVLPEEPVTFQDVAVDFSREEWGLLGPTQRTEYRDVMLETFGHLVSVGWETTLENKELAPNSDIPEEEPAPSLKVQESSRDCALSSTLEDTLQGGVQEVQDTVLKQMESAQEKDLPQKKHFDNRESQANSGALDTNQVSLQKIDNPESQANSGALDTNQVLLHKIPPRKRLRKRDSQVKSMKHNSRVKIHQKSCERQKAKEGNGCRKTFSRSTKQITFIRIHKGSQVCRCSECGKIFRNPRYFSVHKKIHTGERPYVCQDCGKGFVQSSSLTQHQRVHSGERPFECQECGRTFNDRSAISQHLRTHTGAKPYKCQDCGKAFRQSSHLIRHQRTHTGERPYACNKCGKAFTQSSHLIGHQRTHNRTKRKKKQPTS</sequence>
<protein>
    <recommendedName>
        <fullName>Neurotrophin receptor-interacting factor homolog</fullName>
    </recommendedName>
    <alternativeName>
        <fullName>Zinc finger protein 274</fullName>
    </alternativeName>
    <alternativeName>
        <fullName>Zinc finger protein HFB101</fullName>
    </alternativeName>
    <alternativeName>
        <fullName>Zinc finger protein with KRAB and SCAN domains 19</fullName>
    </alternativeName>
    <alternativeName>
        <fullName>Zinc finger protein zfp2</fullName>
        <shortName>Zf2</shortName>
    </alternativeName>
</protein>
<feature type="chain" id="PRO_0000047501" description="Neurotrophin receptor-interacting factor homolog">
    <location>
        <begin position="1"/>
        <end position="653"/>
    </location>
</feature>
<feature type="domain" description="KRAB 1" evidence="3">
    <location>
        <begin position="14"/>
        <end position="85"/>
    </location>
</feature>
<feature type="domain" description="SCAN box" evidence="4">
    <location>
        <begin position="161"/>
        <end position="243"/>
    </location>
</feature>
<feature type="domain" description="KRAB 2" evidence="3">
    <location>
        <begin position="287"/>
        <end position="360"/>
    </location>
</feature>
<feature type="zinc finger region" description="C2H2-type 1" evidence="2">
    <location>
        <begin position="507"/>
        <end position="529"/>
    </location>
</feature>
<feature type="zinc finger region" description="C2H2-type 2" evidence="2">
    <location>
        <begin position="535"/>
        <end position="557"/>
    </location>
</feature>
<feature type="zinc finger region" description="C2H2-type 3" evidence="2">
    <location>
        <begin position="563"/>
        <end position="585"/>
    </location>
</feature>
<feature type="zinc finger region" description="C2H2-type 4" evidence="2">
    <location>
        <begin position="591"/>
        <end position="613"/>
    </location>
</feature>
<feature type="zinc finger region" description="C2H2-type 5" evidence="2">
    <location>
        <begin position="619"/>
        <end position="641"/>
    </location>
</feature>
<feature type="region of interest" description="Disordered" evidence="5">
    <location>
        <begin position="139"/>
        <end position="159"/>
    </location>
</feature>
<feature type="region of interest" description="Disordered" evidence="5">
    <location>
        <begin position="339"/>
        <end position="359"/>
    </location>
</feature>
<feature type="region of interest" description="Disordered" evidence="5">
    <location>
        <begin position="388"/>
        <end position="414"/>
    </location>
</feature>
<feature type="region of interest" description="Disordered" evidence="5">
    <location>
        <begin position="448"/>
        <end position="485"/>
    </location>
</feature>
<feature type="region of interest" description="Disordered" evidence="5">
    <location>
        <begin position="632"/>
        <end position="653"/>
    </location>
</feature>
<feature type="compositionally biased region" description="Basic and acidic residues" evidence="5">
    <location>
        <begin position="389"/>
        <end position="404"/>
    </location>
</feature>
<feature type="compositionally biased region" description="Polar residues" evidence="5">
    <location>
        <begin position="405"/>
        <end position="414"/>
    </location>
</feature>
<feature type="compositionally biased region" description="Basic residues" evidence="5">
    <location>
        <begin position="459"/>
        <end position="470"/>
    </location>
</feature>
<feature type="compositionally biased region" description="Basic and acidic residues" evidence="5">
    <location>
        <begin position="471"/>
        <end position="483"/>
    </location>
</feature>
<feature type="compositionally biased region" description="Basic residues" evidence="5">
    <location>
        <begin position="636"/>
        <end position="653"/>
    </location>
</feature>
<feature type="splice variant" id="VSP_006912" description="In isoform 4." evidence="13 14">
    <location>
        <begin position="1"/>
        <end position="281"/>
    </location>
</feature>
<feature type="splice variant" id="VSP_006910" description="In isoform 3." evidence="12">
    <location>
        <begin position="1"/>
        <end position="105"/>
    </location>
</feature>
<feature type="splice variant" id="VSP_006911" description="In isoform 2." evidence="12">
    <location>
        <begin position="55"/>
        <end position="86"/>
    </location>
</feature>
<feature type="splice variant" id="VSP_006913" description="In isoform 4." evidence="13 14">
    <original>LPE</original>
    <variation>MLQ</variation>
    <location>
        <begin position="282"/>
        <end position="284"/>
    </location>
</feature>
<feature type="sequence variant" id="VAR_064920" description="In dbSNP:rs7256349." evidence="6 7 8 11">
    <original>V</original>
    <variation>I</variation>
    <location>
        <position position="147"/>
    </location>
</feature>
<feature type="sequence conflict" description="In Ref. 2; AAG24390." evidence="15" ref="2">
    <original>V</original>
    <variation>E</variation>
    <location>
        <position position="14"/>
    </location>
</feature>
<feature type="sequence conflict" description="In Ref. 2; AAG24390." evidence="15" ref="2">
    <original>A</original>
    <variation>T</variation>
    <location>
        <position position="212"/>
    </location>
</feature>
<feature type="sequence conflict" description="In Ref. 3; CAE46074." evidence="15" ref="3">
    <original>F</original>
    <variation>S</variation>
    <location>
        <position position="289"/>
    </location>
</feature>
<feature type="sequence conflict" description="In Ref. 1; BAA88522." evidence="15" ref="1">
    <original>G</original>
    <variation>W</variation>
    <location>
        <position position="636"/>
    </location>
</feature>
<keyword id="KW-0025">Alternative splicing</keyword>
<keyword id="KW-0963">Cytoplasm</keyword>
<keyword id="KW-0238">DNA-binding</keyword>
<keyword id="KW-0479">Metal-binding</keyword>
<keyword id="KW-0539">Nucleus</keyword>
<keyword id="KW-1267">Proteomics identification</keyword>
<keyword id="KW-1185">Reference proteome</keyword>
<keyword id="KW-0677">Repeat</keyword>
<keyword id="KW-0678">Repressor</keyword>
<keyword id="KW-0804">Transcription</keyword>
<keyword id="KW-0805">Transcription regulation</keyword>
<keyword id="KW-0862">Zinc</keyword>
<keyword id="KW-0863">Zinc-finger</keyword>
<accession>Q96GC6</accession>
<accession>Q53XU4</accession>
<accession>Q6MZG1</accession>
<accession>Q8WY37</accession>
<accession>Q8WY38</accession>
<accession>Q92969</accession>
<accession>Q9UII0</accession>
<accession>Q9UII1</accession>
<evidence type="ECO:0000250" key="1"/>
<evidence type="ECO:0000255" key="2">
    <source>
        <dbReference type="PROSITE-ProRule" id="PRU00042"/>
    </source>
</evidence>
<evidence type="ECO:0000255" key="3">
    <source>
        <dbReference type="PROSITE-ProRule" id="PRU00119"/>
    </source>
</evidence>
<evidence type="ECO:0000255" key="4">
    <source>
        <dbReference type="PROSITE-ProRule" id="PRU00187"/>
    </source>
</evidence>
<evidence type="ECO:0000256" key="5">
    <source>
        <dbReference type="SAM" id="MobiDB-lite"/>
    </source>
</evidence>
<evidence type="ECO:0000269" key="6">
    <source>
    </source>
</evidence>
<evidence type="ECO:0000269" key="7">
    <source>
    </source>
</evidence>
<evidence type="ECO:0000269" key="8">
    <source>
    </source>
</evidence>
<evidence type="ECO:0000269" key="9">
    <source>
    </source>
</evidence>
<evidence type="ECO:0000269" key="10">
    <source>
    </source>
</evidence>
<evidence type="ECO:0000269" key="11">
    <source ref="4"/>
</evidence>
<evidence type="ECO:0000303" key="12">
    <source>
    </source>
</evidence>
<evidence type="ECO:0000303" key="13">
    <source>
    </source>
</evidence>
<evidence type="ECO:0000303" key="14">
    <source>
    </source>
</evidence>
<evidence type="ECO:0000305" key="15"/>
<comment type="function">
    <text evidence="6 10">Probable transcription repressor. Specifically binds to the 3'-end of zinc-finger coding genes and recruiting chromatin-modifying proteins such as SETDB1 and TRIM28/KAP1, leading to transcription repression. The SETDB1-TRIM28-ZNF274 complex may play a role in recruiting ATRX to the 3'-exons of zinc-finger coding genes with atypical chromatin signatures to establish or maintain/protect H3K9me3 at these transcriptionally active regions (PubMed:27029610).</text>
</comment>
<comment type="subunit">
    <text evidence="9 10">Interacts with SETDB1 and TRIM28/KAP1. Interacts with ATRX. Forms a complex with ATRX, SETDB1 and TRIM28 (PubMed:27029610).</text>
</comment>
<comment type="subcellular location">
    <subcellularLocation>
        <location evidence="1">Cytoplasm</location>
    </subcellularLocation>
    <subcellularLocation>
        <location evidence="6">Nucleus</location>
        <location evidence="6">Nucleolus</location>
    </subcellularLocation>
</comment>
<comment type="alternative products">
    <event type="alternative splicing"/>
    <isoform>
        <id>Q96GC6-1</id>
        <name>1</name>
        <name>SP2114a</name>
        <sequence type="displayed"/>
    </isoform>
    <isoform>
        <id>Q96GC6-2</id>
        <name>2</name>
        <name>ZNF274a</name>
        <sequence type="described" ref="VSP_006911"/>
    </isoform>
    <isoform>
        <id>Q96GC6-3</id>
        <name>3</name>
        <name>ZNF274b</name>
        <sequence type="described" ref="VSP_006910"/>
    </isoform>
    <isoform>
        <id>Q96GC6-4</id>
        <name>4</name>
        <name>SP2114b</name>
        <sequence type="described" ref="VSP_006912 VSP_006913"/>
    </isoform>
    <text>Experimental confirmation may be lacking for some isoforms.</text>
</comment>
<comment type="similarity">
    <text evidence="15">Belongs to the krueppel C2H2-type zinc-finger protein family.</text>
</comment>
<reference key="1">
    <citation type="journal article" date="2000" name="Genomics">
        <title>Identification and characterization of human ZNF274 cDNA, Which encodes a novel kruppel-type zinc-finger protein having nucleolar targeting ability.</title>
        <authorList>
            <person name="Yano K."/>
            <person name="Ueki N."/>
            <person name="Oda T."/>
            <person name="Seki N."/>
            <person name="Masuho Y."/>
            <person name="Muramatsu M."/>
        </authorList>
    </citation>
    <scope>NUCLEOTIDE SEQUENCE [MRNA] (ISOFORMS 2 AND 3)</scope>
    <scope>SUBCELLULAR LOCATION</scope>
    <scope>FUNCTION AS A REPRESSOR</scope>
    <scope>VARIANT ILE-147</scope>
    <source>
        <tissue>Fetal brain</tissue>
    </source>
</reference>
<reference key="2">
    <citation type="journal article" date="2004" name="Proc. Natl. Acad. Sci. U.S.A.">
        <title>Large-scale cDNA transfection screening for genes related to cancer development and progression.</title>
        <authorList>
            <person name="Wan D."/>
            <person name="Gong Y."/>
            <person name="Qin W."/>
            <person name="Zhang P."/>
            <person name="Li J."/>
            <person name="Wei L."/>
            <person name="Zhou X."/>
            <person name="Li H."/>
            <person name="Qiu X."/>
            <person name="Zhong F."/>
            <person name="He L."/>
            <person name="Yu J."/>
            <person name="Yao G."/>
            <person name="Jiang H."/>
            <person name="Qian L."/>
            <person name="Yu Y."/>
            <person name="Shu H."/>
            <person name="Chen X."/>
            <person name="Xu H."/>
            <person name="Guo M."/>
            <person name="Pan Z."/>
            <person name="Chen Y."/>
            <person name="Ge C."/>
            <person name="Yang S."/>
            <person name="Gu J."/>
        </authorList>
    </citation>
    <scope>NUCLEOTIDE SEQUENCE [LARGE SCALE MRNA] (ISOFORMS 1 AND 4)</scope>
    <scope>VARIANT ILE-147</scope>
</reference>
<reference key="3">
    <citation type="journal article" date="2007" name="BMC Genomics">
        <title>The full-ORF clone resource of the German cDNA consortium.</title>
        <authorList>
            <person name="Bechtel S."/>
            <person name="Rosenfelder H."/>
            <person name="Duda A."/>
            <person name="Schmidt C.P."/>
            <person name="Ernst U."/>
            <person name="Wellenreuther R."/>
            <person name="Mehrle A."/>
            <person name="Schuster C."/>
            <person name="Bahr A."/>
            <person name="Bloecker H."/>
            <person name="Heubner D."/>
            <person name="Hoerlein A."/>
            <person name="Michel G."/>
            <person name="Wedler H."/>
            <person name="Koehrer K."/>
            <person name="Ottenwaelder B."/>
            <person name="Poustka A."/>
            <person name="Wiemann S."/>
            <person name="Schupp I."/>
        </authorList>
    </citation>
    <scope>NUCLEOTIDE SEQUENCE [LARGE SCALE MRNA] (ISOFORM 4)</scope>
    <source>
        <tissue>Salivary gland</tissue>
    </source>
</reference>
<reference key="4">
    <citation type="submission" date="2003-05" db="EMBL/GenBank/DDBJ databases">
        <title>Cloning of human full-length CDSs in BD Creator(TM) system donor vector.</title>
        <authorList>
            <person name="Kalnine N."/>
            <person name="Chen X."/>
            <person name="Rolfs A."/>
            <person name="Halleck A."/>
            <person name="Hines L."/>
            <person name="Eisenstein S."/>
            <person name="Koundinya M."/>
            <person name="Raphael J."/>
            <person name="Moreira D."/>
            <person name="Kelley T."/>
            <person name="LaBaer J."/>
            <person name="Lin Y."/>
            <person name="Phelan M."/>
            <person name="Farmer A."/>
        </authorList>
    </citation>
    <scope>NUCLEOTIDE SEQUENCE [LARGE SCALE MRNA] (ISOFORM 1)</scope>
    <scope>VARIANT ILE-147</scope>
</reference>
<reference key="5">
    <citation type="journal article" date="2004" name="Nature">
        <title>The DNA sequence and biology of human chromosome 19.</title>
        <authorList>
            <person name="Grimwood J."/>
            <person name="Gordon L.A."/>
            <person name="Olsen A.S."/>
            <person name="Terry A."/>
            <person name="Schmutz J."/>
            <person name="Lamerdin J.E."/>
            <person name="Hellsten U."/>
            <person name="Goodstein D."/>
            <person name="Couronne O."/>
            <person name="Tran-Gyamfi M."/>
            <person name="Aerts A."/>
            <person name="Altherr M."/>
            <person name="Ashworth L."/>
            <person name="Bajorek E."/>
            <person name="Black S."/>
            <person name="Branscomb E."/>
            <person name="Caenepeel S."/>
            <person name="Carrano A.V."/>
            <person name="Caoile C."/>
            <person name="Chan Y.M."/>
            <person name="Christensen M."/>
            <person name="Cleland C.A."/>
            <person name="Copeland A."/>
            <person name="Dalin E."/>
            <person name="Dehal P."/>
            <person name="Denys M."/>
            <person name="Detter J.C."/>
            <person name="Escobar J."/>
            <person name="Flowers D."/>
            <person name="Fotopulos D."/>
            <person name="Garcia C."/>
            <person name="Georgescu A.M."/>
            <person name="Glavina T."/>
            <person name="Gomez M."/>
            <person name="Gonzales E."/>
            <person name="Groza M."/>
            <person name="Hammon N."/>
            <person name="Hawkins T."/>
            <person name="Haydu L."/>
            <person name="Ho I."/>
            <person name="Huang W."/>
            <person name="Israni S."/>
            <person name="Jett J."/>
            <person name="Kadner K."/>
            <person name="Kimball H."/>
            <person name="Kobayashi A."/>
            <person name="Larionov V."/>
            <person name="Leem S.-H."/>
            <person name="Lopez F."/>
            <person name="Lou Y."/>
            <person name="Lowry S."/>
            <person name="Malfatti S."/>
            <person name="Martinez D."/>
            <person name="McCready P.M."/>
            <person name="Medina C."/>
            <person name="Morgan J."/>
            <person name="Nelson K."/>
            <person name="Nolan M."/>
            <person name="Ovcharenko I."/>
            <person name="Pitluck S."/>
            <person name="Pollard M."/>
            <person name="Popkie A.P."/>
            <person name="Predki P."/>
            <person name="Quan G."/>
            <person name="Ramirez L."/>
            <person name="Rash S."/>
            <person name="Retterer J."/>
            <person name="Rodriguez A."/>
            <person name="Rogers S."/>
            <person name="Salamov A."/>
            <person name="Salazar A."/>
            <person name="She X."/>
            <person name="Smith D."/>
            <person name="Slezak T."/>
            <person name="Solovyev V."/>
            <person name="Thayer N."/>
            <person name="Tice H."/>
            <person name="Tsai M."/>
            <person name="Ustaszewska A."/>
            <person name="Vo N."/>
            <person name="Wagner M."/>
            <person name="Wheeler J."/>
            <person name="Wu K."/>
            <person name="Xie G."/>
            <person name="Yang J."/>
            <person name="Dubchak I."/>
            <person name="Furey T.S."/>
            <person name="DeJong P."/>
            <person name="Dickson M."/>
            <person name="Gordon D."/>
            <person name="Eichler E.E."/>
            <person name="Pennacchio L.A."/>
            <person name="Richardson P."/>
            <person name="Stubbs L."/>
            <person name="Rokhsar D.S."/>
            <person name="Myers R.M."/>
            <person name="Rubin E.M."/>
            <person name="Lucas S.M."/>
        </authorList>
    </citation>
    <scope>NUCLEOTIDE SEQUENCE [LARGE SCALE GENOMIC DNA]</scope>
</reference>
<reference key="6">
    <citation type="journal article" date="2004" name="Genome Res.">
        <title>The status, quality, and expansion of the NIH full-length cDNA project: the Mammalian Gene Collection (MGC).</title>
        <authorList>
            <consortium name="The MGC Project Team"/>
        </authorList>
    </citation>
    <scope>NUCLEOTIDE SEQUENCE [LARGE SCALE MRNA] (ISOFORM 1)</scope>
    <scope>VARIANT ILE-147</scope>
    <source>
        <tissue>Skin</tissue>
    </source>
</reference>
<reference key="7">
    <citation type="journal article" date="1998" name="DNA Seq.">
        <title>Computer sequence analysis of human highly conserved zinc finger modules.</title>
        <authorList>
            <person name="Petroni D."/>
            <person name="Bartolini E."/>
            <person name="Chiaramonte R."/>
            <person name="Ottolenghi S."/>
            <person name="Comi P."/>
        </authorList>
    </citation>
    <scope>NUCLEOTIDE SEQUENCE [MRNA] OF 503-653</scope>
</reference>
<reference key="8">
    <citation type="journal article" date="2010" name="PLoS ONE">
        <title>ZNF274 recruits the histone methyltransferase SETDB1 to the 3' ends of ZNF genes.</title>
        <authorList>
            <person name="Frietze S."/>
            <person name="O'Geen H."/>
            <person name="Blahnik K.R."/>
            <person name="Jin V.X."/>
            <person name="Farnham P.J."/>
        </authorList>
    </citation>
    <scope>DNA-BINDING</scope>
    <scope>INTERACTION WITH SETDB1 AND TRIM28</scope>
</reference>
<reference key="9">
    <citation type="journal article" date="2016" name="Epigenetics">
        <title>ATRX binds to atypical chromatin domains at the 3' exons of zinc finger genes to preserve H3K9me3 enrichment.</title>
        <authorList>
            <person name="Valle-Garcia D."/>
            <person name="Qadeer Z.A."/>
            <person name="McHugh D.S."/>
            <person name="Ghiraldini F.G."/>
            <person name="Chowdhury A.H."/>
            <person name="Hasson D."/>
            <person name="Dyer M.A."/>
            <person name="Recillas-Targa F."/>
            <person name="Bernstein E."/>
        </authorList>
    </citation>
    <scope>FUNCTION</scope>
    <scope>INTERACTION WITH ATRX</scope>
    <scope>FORMATION OF A COMPLEX WITH ATRX; TRIM28 AND SETDB1</scope>
</reference>
<gene>
    <name type="primary">ZNF274</name>
    <name type="synonym">ZKSCAN19</name>
    <name type="ORF">SP2114</name>
</gene>
<organism>
    <name type="scientific">Homo sapiens</name>
    <name type="common">Human</name>
    <dbReference type="NCBI Taxonomy" id="9606"/>
    <lineage>
        <taxon>Eukaryota</taxon>
        <taxon>Metazoa</taxon>
        <taxon>Chordata</taxon>
        <taxon>Craniata</taxon>
        <taxon>Vertebrata</taxon>
        <taxon>Euteleostomi</taxon>
        <taxon>Mammalia</taxon>
        <taxon>Eutheria</taxon>
        <taxon>Euarchontoglires</taxon>
        <taxon>Primates</taxon>
        <taxon>Haplorrhini</taxon>
        <taxon>Catarrhini</taxon>
        <taxon>Hominidae</taxon>
        <taxon>Homo</taxon>
    </lineage>
</organism>
<name>ZN274_HUMAN</name>
<proteinExistence type="evidence at protein level"/>
<dbReference type="EMBL" id="AB029149">
    <property type="protein sequence ID" value="BAA88522.1"/>
    <property type="molecule type" value="mRNA"/>
</dbReference>
<dbReference type="EMBL" id="AB029150">
    <property type="protein sequence ID" value="BAA88523.1"/>
    <property type="molecule type" value="mRNA"/>
</dbReference>
<dbReference type="EMBL" id="AF275680">
    <property type="protein sequence ID" value="AAG24390.1"/>
    <property type="molecule type" value="mRNA"/>
</dbReference>
<dbReference type="EMBL" id="AF275681">
    <property type="protein sequence ID" value="AAG24391.1"/>
    <property type="molecule type" value="mRNA"/>
</dbReference>
<dbReference type="EMBL" id="BX641169">
    <property type="protein sequence ID" value="CAE46074.1"/>
    <property type="molecule type" value="mRNA"/>
</dbReference>
<dbReference type="EMBL" id="BT007304">
    <property type="protein sequence ID" value="AAP35968.1"/>
    <property type="molecule type" value="mRNA"/>
</dbReference>
<dbReference type="EMBL" id="AC008751">
    <property type="status" value="NOT_ANNOTATED_CDS"/>
    <property type="molecule type" value="Genomic_DNA"/>
</dbReference>
<dbReference type="EMBL" id="AC020915">
    <property type="status" value="NOT_ANNOTATED_CDS"/>
    <property type="molecule type" value="Genomic_DNA"/>
</dbReference>
<dbReference type="EMBL" id="BC009763">
    <property type="protein sequence ID" value="AAH09763.1"/>
    <property type="molecule type" value="mRNA"/>
</dbReference>
<dbReference type="EMBL" id="U71598">
    <property type="protein sequence ID" value="AAB16810.1"/>
    <property type="molecule type" value="mRNA"/>
</dbReference>
<dbReference type="CCDS" id="CCDS74473.1">
    <molecule id="Q96GC6-1"/>
</dbReference>
<dbReference type="CCDS" id="CCDS74474.1">
    <molecule id="Q96GC6-2"/>
</dbReference>
<dbReference type="CCDS" id="CCDS74476.1">
    <molecule id="Q96GC6-3"/>
</dbReference>
<dbReference type="RefSeq" id="NP_001265663.1">
    <property type="nucleotide sequence ID" value="NM_001278734.1"/>
</dbReference>
<dbReference type="RefSeq" id="NP_057408.2">
    <molecule id="Q96GC6-3"/>
    <property type="nucleotide sequence ID" value="NM_016324.3"/>
</dbReference>
<dbReference type="RefSeq" id="NP_057409.1">
    <molecule id="Q96GC6-2"/>
    <property type="nucleotide sequence ID" value="NM_016325.4"/>
</dbReference>
<dbReference type="RefSeq" id="NP_598009.1">
    <molecule id="Q96GC6-1"/>
    <property type="nucleotide sequence ID" value="NM_133502.3"/>
</dbReference>
<dbReference type="RefSeq" id="XP_011524629.1">
    <molecule id="Q96GC6-3"/>
    <property type="nucleotide sequence ID" value="XM_011526327.2"/>
</dbReference>
<dbReference type="RefSeq" id="XP_016881663.1">
    <property type="nucleotide sequence ID" value="XM_017026174.1"/>
</dbReference>
<dbReference type="RefSeq" id="XP_047294031.1">
    <molecule id="Q96GC6-1"/>
    <property type="nucleotide sequence ID" value="XM_047438075.1"/>
</dbReference>
<dbReference type="RefSeq" id="XP_047294032.1">
    <molecule id="Q96GC6-1"/>
    <property type="nucleotide sequence ID" value="XM_047438076.1"/>
</dbReference>
<dbReference type="RefSeq" id="XP_047294033.1">
    <molecule id="Q96GC6-3"/>
    <property type="nucleotide sequence ID" value="XM_047438077.1"/>
</dbReference>
<dbReference type="SMR" id="Q96GC6"/>
<dbReference type="BioGRID" id="115999">
    <property type="interactions" value="18"/>
</dbReference>
<dbReference type="CORUM" id="Q96GC6"/>
<dbReference type="FunCoup" id="Q96GC6">
    <property type="interactions" value="491"/>
</dbReference>
<dbReference type="IntAct" id="Q96GC6">
    <property type="interactions" value="21"/>
</dbReference>
<dbReference type="MINT" id="Q96GC6"/>
<dbReference type="STRING" id="9606.ENSP00000484810"/>
<dbReference type="iPTMnet" id="Q96GC6"/>
<dbReference type="PhosphoSitePlus" id="Q96GC6"/>
<dbReference type="BioMuta" id="ZNF274"/>
<dbReference type="DMDM" id="327478548"/>
<dbReference type="jPOST" id="Q96GC6"/>
<dbReference type="MassIVE" id="Q96GC6"/>
<dbReference type="PaxDb" id="9606-ENSP00000478533"/>
<dbReference type="PeptideAtlas" id="Q96GC6"/>
<dbReference type="ProteomicsDB" id="76611">
    <molecule id="Q96GC6-1"/>
</dbReference>
<dbReference type="ProteomicsDB" id="76612">
    <molecule id="Q96GC6-2"/>
</dbReference>
<dbReference type="ProteomicsDB" id="76613">
    <molecule id="Q96GC6-3"/>
</dbReference>
<dbReference type="ProteomicsDB" id="76614">
    <molecule id="Q96GC6-4"/>
</dbReference>
<dbReference type="Antibodypedia" id="9924">
    <property type="antibodies" value="221 antibodies from 23 providers"/>
</dbReference>
<dbReference type="DNASU" id="10782"/>
<dbReference type="Ensembl" id="ENST00000345813.7">
    <molecule id="Q96GC6-2"/>
    <property type="protein sequence ID" value="ENSP00000321187.5"/>
    <property type="gene ID" value="ENSG00000171606.18"/>
</dbReference>
<dbReference type="Ensembl" id="ENST00000424679.6">
    <molecule id="Q96GC6-3"/>
    <property type="protein sequence ID" value="ENSP00000409872.3"/>
    <property type="gene ID" value="ENSG00000171606.18"/>
</dbReference>
<dbReference type="Ensembl" id="ENST00000610905.4">
    <molecule id="Q96GC6-1"/>
    <property type="protein sequence ID" value="ENSP00000478533.1"/>
    <property type="gene ID" value="ENSG00000171606.18"/>
</dbReference>
<dbReference type="Ensembl" id="ENST00000617501.5">
    <molecule id="Q96GC6-1"/>
    <property type="protein sequence ID" value="ENSP00000484810.1"/>
    <property type="gene ID" value="ENSG00000171606.18"/>
</dbReference>
<dbReference type="GeneID" id="10782"/>
<dbReference type="KEGG" id="hsa:10782"/>
<dbReference type="MANE-Select" id="ENST00000617501.5">
    <property type="protein sequence ID" value="ENSP00000484810.1"/>
    <property type="RefSeq nucleotide sequence ID" value="NM_133502.3"/>
    <property type="RefSeq protein sequence ID" value="NP_598009.1"/>
</dbReference>
<dbReference type="UCSC" id="uc032igq.2">
    <molecule id="Q96GC6-1"/>
    <property type="organism name" value="human"/>
</dbReference>
<dbReference type="AGR" id="HGNC:13068"/>
<dbReference type="CTD" id="10782"/>
<dbReference type="DisGeNET" id="10782"/>
<dbReference type="GeneCards" id="ZNF274"/>
<dbReference type="HGNC" id="HGNC:13068">
    <property type="gene designation" value="ZNF274"/>
</dbReference>
<dbReference type="HPA" id="ENSG00000171606">
    <property type="expression patterns" value="Low tissue specificity"/>
</dbReference>
<dbReference type="MIM" id="605467">
    <property type="type" value="gene"/>
</dbReference>
<dbReference type="neXtProt" id="NX_Q96GC6"/>
<dbReference type="OpenTargets" id="ENSG00000171606"/>
<dbReference type="PharmGKB" id="PA37644"/>
<dbReference type="VEuPathDB" id="HostDB:ENSG00000171606"/>
<dbReference type="eggNOG" id="KOG1721">
    <property type="taxonomic scope" value="Eukaryota"/>
</dbReference>
<dbReference type="GeneTree" id="ENSGT00940000162111"/>
<dbReference type="HOGENOM" id="CLU_002678_49_8_1"/>
<dbReference type="InParanoid" id="Q96GC6"/>
<dbReference type="OMA" id="VEDVTWM"/>
<dbReference type="OrthoDB" id="6077919at2759"/>
<dbReference type="PAN-GO" id="Q96GC6">
    <property type="GO annotations" value="3 GO annotations based on evolutionary models"/>
</dbReference>
<dbReference type="PhylomeDB" id="Q96GC6"/>
<dbReference type="TreeFam" id="TF338018"/>
<dbReference type="PathwayCommons" id="Q96GC6"/>
<dbReference type="Reactome" id="R-HSA-212436">
    <property type="pathway name" value="Generic Transcription Pathway"/>
</dbReference>
<dbReference type="SignaLink" id="Q96GC6"/>
<dbReference type="BioGRID-ORCS" id="10782">
    <property type="hits" value="11 hits in 347 CRISPR screens"/>
</dbReference>
<dbReference type="CD-CODE" id="91857CE7">
    <property type="entry name" value="Nucleolus"/>
</dbReference>
<dbReference type="ChiTaRS" id="ZNF274">
    <property type="organism name" value="human"/>
</dbReference>
<dbReference type="GeneWiki" id="ZNF274"/>
<dbReference type="GenomeRNAi" id="10782"/>
<dbReference type="Pharos" id="Q96GC6">
    <property type="development level" value="Tbio"/>
</dbReference>
<dbReference type="PRO" id="PR:Q96GC6"/>
<dbReference type="Proteomes" id="UP000005640">
    <property type="component" value="Chromosome 19"/>
</dbReference>
<dbReference type="RNAct" id="Q96GC6">
    <property type="molecule type" value="protein"/>
</dbReference>
<dbReference type="Bgee" id="ENSG00000171606">
    <property type="expression patterns" value="Expressed in left ovary and 201 other cell types or tissues"/>
</dbReference>
<dbReference type="ExpressionAtlas" id="Q96GC6">
    <property type="expression patterns" value="baseline and differential"/>
</dbReference>
<dbReference type="GO" id="GO:0005737">
    <property type="term" value="C:cytoplasm"/>
    <property type="evidence" value="ECO:0007669"/>
    <property type="project" value="UniProtKB-SubCell"/>
</dbReference>
<dbReference type="GO" id="GO:0005730">
    <property type="term" value="C:nucleolus"/>
    <property type="evidence" value="ECO:0000304"/>
    <property type="project" value="ProtInc"/>
</dbReference>
<dbReference type="GO" id="GO:0003682">
    <property type="term" value="F:chromatin binding"/>
    <property type="evidence" value="ECO:0000314"/>
    <property type="project" value="UniProtKB"/>
</dbReference>
<dbReference type="GO" id="GO:0000981">
    <property type="term" value="F:DNA-binding transcription factor activity, RNA polymerase II-specific"/>
    <property type="evidence" value="ECO:0000318"/>
    <property type="project" value="GO_Central"/>
</dbReference>
<dbReference type="GO" id="GO:0000978">
    <property type="term" value="F:RNA polymerase II cis-regulatory region sequence-specific DNA binding"/>
    <property type="evidence" value="ECO:0000318"/>
    <property type="project" value="GO_Central"/>
</dbReference>
<dbReference type="GO" id="GO:0043565">
    <property type="term" value="F:sequence-specific DNA binding"/>
    <property type="evidence" value="ECO:0000314"/>
    <property type="project" value="UniProtKB"/>
</dbReference>
<dbReference type="GO" id="GO:1990837">
    <property type="term" value="F:sequence-specific double-stranded DNA binding"/>
    <property type="evidence" value="ECO:0000314"/>
    <property type="project" value="ARUK-UCL"/>
</dbReference>
<dbReference type="GO" id="GO:0008270">
    <property type="term" value="F:zinc ion binding"/>
    <property type="evidence" value="ECO:0007669"/>
    <property type="project" value="UniProtKB-KW"/>
</dbReference>
<dbReference type="GO" id="GO:0006338">
    <property type="term" value="P:chromatin remodeling"/>
    <property type="evidence" value="ECO:0000315"/>
    <property type="project" value="UniProtKB"/>
</dbReference>
<dbReference type="GO" id="GO:0000122">
    <property type="term" value="P:negative regulation of transcription by RNA polymerase II"/>
    <property type="evidence" value="ECO:0000304"/>
    <property type="project" value="GO_Central"/>
</dbReference>
<dbReference type="GO" id="GO:0006355">
    <property type="term" value="P:regulation of DNA-templated transcription"/>
    <property type="evidence" value="ECO:0000304"/>
    <property type="project" value="ProtInc"/>
</dbReference>
<dbReference type="GO" id="GO:0006357">
    <property type="term" value="P:regulation of transcription by RNA polymerase II"/>
    <property type="evidence" value="ECO:0000318"/>
    <property type="project" value="GO_Central"/>
</dbReference>
<dbReference type="CDD" id="cd07765">
    <property type="entry name" value="KRAB_A-box"/>
    <property type="match status" value="2"/>
</dbReference>
<dbReference type="CDD" id="cd07936">
    <property type="entry name" value="SCAN"/>
    <property type="match status" value="1"/>
</dbReference>
<dbReference type="DisProt" id="DP01556"/>
<dbReference type="FunFam" id="3.30.160.60:FF:000965">
    <property type="entry name" value="Neurotrophin receptor-interacting factor homolog"/>
    <property type="match status" value="1"/>
</dbReference>
<dbReference type="FunFam" id="3.30.160.60:FF:001712">
    <property type="entry name" value="Neurotrophin receptor-interacting factor homolog"/>
    <property type="match status" value="1"/>
</dbReference>
<dbReference type="FunFam" id="3.30.160.60:FF:001429">
    <property type="entry name" value="neurotrophin receptor-interacting factor homolog"/>
    <property type="match status" value="1"/>
</dbReference>
<dbReference type="FunFam" id="3.30.160.60:FF:002716">
    <property type="entry name" value="Zinc finger protein 212"/>
    <property type="match status" value="1"/>
</dbReference>
<dbReference type="FunFam" id="1.10.4020.10:FF:000001">
    <property type="entry name" value="zinc finger protein 263 isoform X1"/>
    <property type="match status" value="1"/>
</dbReference>
<dbReference type="FunFam" id="3.30.160.60:FF:000212">
    <property type="entry name" value="zinc finger protein 382 isoform X2"/>
    <property type="match status" value="1"/>
</dbReference>
<dbReference type="Gene3D" id="6.10.140.140">
    <property type="match status" value="2"/>
</dbReference>
<dbReference type="Gene3D" id="3.30.160.60">
    <property type="entry name" value="Classic Zinc Finger"/>
    <property type="match status" value="5"/>
</dbReference>
<dbReference type="Gene3D" id="1.10.4020.10">
    <property type="entry name" value="DNA breaking-rejoining enzymes"/>
    <property type="match status" value="1"/>
</dbReference>
<dbReference type="InterPro" id="IPR001909">
    <property type="entry name" value="KRAB"/>
</dbReference>
<dbReference type="InterPro" id="IPR036051">
    <property type="entry name" value="KRAB_dom_sf"/>
</dbReference>
<dbReference type="InterPro" id="IPR003309">
    <property type="entry name" value="SCAN_dom"/>
</dbReference>
<dbReference type="InterPro" id="IPR038269">
    <property type="entry name" value="SCAN_sf"/>
</dbReference>
<dbReference type="InterPro" id="IPR036236">
    <property type="entry name" value="Znf_C2H2_sf"/>
</dbReference>
<dbReference type="InterPro" id="IPR013087">
    <property type="entry name" value="Znf_C2H2_type"/>
</dbReference>
<dbReference type="PANTHER" id="PTHR24381:SF393">
    <property type="entry name" value="CHROMATIN-LINKED ADAPTOR FOR MSL PROTEINS, ISOFORM B"/>
    <property type="match status" value="1"/>
</dbReference>
<dbReference type="PANTHER" id="PTHR24381">
    <property type="entry name" value="ZINC FINGER PROTEIN"/>
    <property type="match status" value="1"/>
</dbReference>
<dbReference type="Pfam" id="PF01352">
    <property type="entry name" value="KRAB"/>
    <property type="match status" value="2"/>
</dbReference>
<dbReference type="Pfam" id="PF02023">
    <property type="entry name" value="SCAN"/>
    <property type="match status" value="1"/>
</dbReference>
<dbReference type="Pfam" id="PF00096">
    <property type="entry name" value="zf-C2H2"/>
    <property type="match status" value="5"/>
</dbReference>
<dbReference type="SMART" id="SM00349">
    <property type="entry name" value="KRAB"/>
    <property type="match status" value="2"/>
</dbReference>
<dbReference type="SMART" id="SM00431">
    <property type="entry name" value="SCAN"/>
    <property type="match status" value="1"/>
</dbReference>
<dbReference type="SMART" id="SM00355">
    <property type="entry name" value="ZnF_C2H2"/>
    <property type="match status" value="5"/>
</dbReference>
<dbReference type="SUPFAM" id="SSF57667">
    <property type="entry name" value="beta-beta-alpha zinc fingers"/>
    <property type="match status" value="3"/>
</dbReference>
<dbReference type="SUPFAM" id="SSF109640">
    <property type="entry name" value="KRAB domain (Kruppel-associated box)"/>
    <property type="match status" value="2"/>
</dbReference>
<dbReference type="SUPFAM" id="SSF47353">
    <property type="entry name" value="Retrovirus capsid dimerization domain-like"/>
    <property type="match status" value="1"/>
</dbReference>
<dbReference type="PROSITE" id="PS50805">
    <property type="entry name" value="KRAB"/>
    <property type="match status" value="2"/>
</dbReference>
<dbReference type="PROSITE" id="PS50804">
    <property type="entry name" value="SCAN_BOX"/>
    <property type="match status" value="1"/>
</dbReference>
<dbReference type="PROSITE" id="PS00028">
    <property type="entry name" value="ZINC_FINGER_C2H2_1"/>
    <property type="match status" value="5"/>
</dbReference>
<dbReference type="PROSITE" id="PS50157">
    <property type="entry name" value="ZINC_FINGER_C2H2_2"/>
    <property type="match status" value="5"/>
</dbReference>